<protein>
    <recommendedName>
        <fullName>tRNA threonylcarbamoyladenosine biosynthesis protein TsaB</fullName>
    </recommendedName>
    <alternativeName>
        <fullName>t(6)A37 threonylcarbamoyladenosine biosynthesis protein TsaB</fullName>
    </alternativeName>
</protein>
<feature type="chain" id="PRO_0000096992" description="tRNA threonylcarbamoyladenosine biosynthesis protein TsaB">
    <location>
        <begin position="1"/>
        <end position="221"/>
    </location>
</feature>
<evidence type="ECO:0000250" key="1"/>
<evidence type="ECO:0000305" key="2"/>
<dbReference type="EMBL" id="BA000003">
    <property type="protein sequence ID" value="BAB13032.1"/>
    <property type="molecule type" value="Genomic_DNA"/>
</dbReference>
<dbReference type="RefSeq" id="NP_240146.1">
    <property type="nucleotide sequence ID" value="NC_002528.1"/>
</dbReference>
<dbReference type="RefSeq" id="WP_010896067.1">
    <property type="nucleotide sequence ID" value="NC_002528.1"/>
</dbReference>
<dbReference type="SMR" id="P57409"/>
<dbReference type="STRING" id="563178.BUAP5A_317"/>
<dbReference type="EnsemblBacteria" id="BAB13032">
    <property type="protein sequence ID" value="BAB13032"/>
    <property type="gene ID" value="BAB13032"/>
</dbReference>
<dbReference type="KEGG" id="buc:BU324"/>
<dbReference type="PATRIC" id="fig|107806.10.peg.336"/>
<dbReference type="eggNOG" id="COG1214">
    <property type="taxonomic scope" value="Bacteria"/>
</dbReference>
<dbReference type="HOGENOM" id="CLU_064886_2_0_6"/>
<dbReference type="Proteomes" id="UP000001806">
    <property type="component" value="Chromosome"/>
</dbReference>
<dbReference type="GO" id="GO:0005829">
    <property type="term" value="C:cytosol"/>
    <property type="evidence" value="ECO:0007669"/>
    <property type="project" value="TreeGrafter"/>
</dbReference>
<dbReference type="GO" id="GO:0002949">
    <property type="term" value="P:tRNA threonylcarbamoyladenosine modification"/>
    <property type="evidence" value="ECO:0007669"/>
    <property type="project" value="InterPro"/>
</dbReference>
<dbReference type="CDD" id="cd24032">
    <property type="entry name" value="ASKHA_NBD_TsaB"/>
    <property type="match status" value="1"/>
</dbReference>
<dbReference type="Gene3D" id="3.30.420.40">
    <property type="match status" value="2"/>
</dbReference>
<dbReference type="InterPro" id="IPR043129">
    <property type="entry name" value="ATPase_NBD"/>
</dbReference>
<dbReference type="InterPro" id="IPR000905">
    <property type="entry name" value="Gcp-like_dom"/>
</dbReference>
<dbReference type="InterPro" id="IPR022496">
    <property type="entry name" value="T6A_TsaB"/>
</dbReference>
<dbReference type="NCBIfam" id="TIGR03725">
    <property type="entry name" value="T6A_YeaZ"/>
    <property type="match status" value="1"/>
</dbReference>
<dbReference type="PANTHER" id="PTHR11735">
    <property type="entry name" value="TRNA N6-ADENOSINE THREONYLCARBAMOYLTRANSFERASE"/>
    <property type="match status" value="1"/>
</dbReference>
<dbReference type="PANTHER" id="PTHR11735:SF11">
    <property type="entry name" value="TRNA THREONYLCARBAMOYLADENOSINE BIOSYNTHESIS PROTEIN TSAB"/>
    <property type="match status" value="1"/>
</dbReference>
<dbReference type="Pfam" id="PF00814">
    <property type="entry name" value="TsaD"/>
    <property type="match status" value="1"/>
</dbReference>
<dbReference type="SUPFAM" id="SSF53067">
    <property type="entry name" value="Actin-like ATPase domain"/>
    <property type="match status" value="2"/>
</dbReference>
<gene>
    <name type="primary">tsaB</name>
    <name type="ordered locus">BU324</name>
</gene>
<proteinExistence type="inferred from homology"/>
<keyword id="KW-0963">Cytoplasm</keyword>
<keyword id="KW-1185">Reference proteome</keyword>
<keyword id="KW-0819">tRNA processing</keyword>
<organism>
    <name type="scientific">Buchnera aphidicola subsp. Acyrthosiphon pisum (strain APS)</name>
    <name type="common">Acyrthosiphon pisum symbiotic bacterium</name>
    <dbReference type="NCBI Taxonomy" id="107806"/>
    <lineage>
        <taxon>Bacteria</taxon>
        <taxon>Pseudomonadati</taxon>
        <taxon>Pseudomonadota</taxon>
        <taxon>Gammaproteobacteria</taxon>
        <taxon>Enterobacterales</taxon>
        <taxon>Erwiniaceae</taxon>
        <taxon>Buchnera</taxon>
    </lineage>
</organism>
<name>TSAB_BUCAI</name>
<reference key="1">
    <citation type="journal article" date="2000" name="Nature">
        <title>Genome sequence of the endocellular bacterial symbiont of aphids Buchnera sp. APS.</title>
        <authorList>
            <person name="Shigenobu S."/>
            <person name="Watanabe H."/>
            <person name="Hattori M."/>
            <person name="Sakaki Y."/>
            <person name="Ishikawa H."/>
        </authorList>
    </citation>
    <scope>NUCLEOTIDE SEQUENCE [LARGE SCALE GENOMIC DNA]</scope>
    <source>
        <strain>APS</strain>
    </source>
</reference>
<accession>P57409</accession>
<sequence>MSNIILSIESSLDCCSVAIYKNEYIHSLSEKCKKKHTTHILPMIKEILSQTKTEFKELNYVSFSKGPGNFTSIRIAASIAQSLSISLKIPIISVSTLAIMAEKTFRKYKQKDVIVAIHAKKKQVYWAKYTRNKNSIWIGEYTESLLEKKIIQEKIENLKKRWTLVSDQSELIEFQNILNVKKNYVFLPNAKDIIPFVLLKIKNKNKSFSIENNINYLYNQF</sequence>
<comment type="function">
    <text evidence="1">Required for the formation of a threonylcarbamoyl group on adenosine at position 37 (t(6)A37) in tRNAs that read codons beginning with adenine. Is involved in the transfer of the threonylcarbamoyl moiety of threonylcarbamoyl-AMP (TC-AMP) to the N6 group of A37, together with TsaD and TsaE; this reaction does not require ATP in vitro. TsaB seems to play an indirect role in the t(6)A biosynthesis pathway, possibly in regulating the core enzymatic function of TsaD (By similarity).</text>
</comment>
<comment type="subcellular location">
    <subcellularLocation>
        <location evidence="1">Cytoplasm</location>
    </subcellularLocation>
</comment>
<comment type="similarity">
    <text evidence="2">Belongs to the KAE1 / TsaD family. TsaB subfamily.</text>
</comment>